<evidence type="ECO:0000305" key="1"/>
<evidence type="ECO:0000305" key="2">
    <source>
    </source>
</evidence>
<comment type="miscellaneous">
    <text evidence="1">Completely overlaps BUD5.</text>
</comment>
<comment type="caution">
    <text evidence="2">Product of a dubious gene prediction unlikely to encode a functional protein. Because of that it is not part of the S.cerevisiae S288c complete/reference proteome set.</text>
</comment>
<protein>
    <recommendedName>
        <fullName>Putative uncharacterized protein YCR038W-A</fullName>
    </recommendedName>
</protein>
<name>YC038_YEAST</name>
<dbReference type="EMBL" id="X59720">
    <property type="protein sequence ID" value="CAC42985.1"/>
    <property type="molecule type" value="Genomic_DNA"/>
</dbReference>
<dbReference type="SMR" id="Q96VG8"/>
<dbReference type="STRING" id="4932.YCR038W-A"/>
<dbReference type="PaxDb" id="4932-YCR038W-A"/>
<dbReference type="EnsemblFungi" id="YCR038W-A_mRNA">
    <property type="protein sequence ID" value="YCR038W-A"/>
    <property type="gene ID" value="YCR038W-A"/>
</dbReference>
<dbReference type="AGR" id="SGD:S000007597"/>
<dbReference type="SGD" id="S000007597">
    <property type="gene designation" value="YCR038W-A"/>
</dbReference>
<dbReference type="HOGENOM" id="CLU_3279832_0_0_1"/>
<sequence length="41" mass="4826">MNCCRRTSVMLEICILLTLLETIWPWIAKRAVTNRSSCSRR</sequence>
<reference key="1">
    <citation type="journal article" date="1992" name="Nature">
        <title>The complete DNA sequence of yeast chromosome III.</title>
        <authorList>
            <person name="Oliver S.G."/>
            <person name="van der Aart Q.J.M."/>
            <person name="Agostoni-Carbone M.L."/>
            <person name="Aigle M."/>
            <person name="Alberghina L."/>
            <person name="Alexandraki D."/>
            <person name="Antoine G."/>
            <person name="Anwar R."/>
            <person name="Ballesta J.P.G."/>
            <person name="Benit P."/>
            <person name="Berben G."/>
            <person name="Bergantino E."/>
            <person name="Biteau N."/>
            <person name="Bolle P.-A."/>
            <person name="Bolotin-Fukuhara M."/>
            <person name="Brown A."/>
            <person name="Brown A.J.P."/>
            <person name="Buhler J.-M."/>
            <person name="Carcano C."/>
            <person name="Carignani G."/>
            <person name="Cederberg H."/>
            <person name="Chanet R."/>
            <person name="Contreras R."/>
            <person name="Crouzet M."/>
            <person name="Daignan-Fornier B."/>
            <person name="Defoor E."/>
            <person name="Delgado M.D."/>
            <person name="Demolder J."/>
            <person name="Doira C."/>
            <person name="Dubois E."/>
            <person name="Dujon B."/>
            <person name="Duesterhoeft A."/>
            <person name="Erdmann D."/>
            <person name="Esteban M."/>
            <person name="Fabre F."/>
            <person name="Fairhead C."/>
            <person name="Faye G."/>
            <person name="Feldmann H."/>
            <person name="Fiers W."/>
            <person name="Francingues-Gaillard M.-C."/>
            <person name="Franco L."/>
            <person name="Frontali L."/>
            <person name="Fukuhara H."/>
            <person name="Fuller L.J."/>
            <person name="Galland P."/>
            <person name="Gent M.E."/>
            <person name="Gigot D."/>
            <person name="Gilliquet V."/>
            <person name="Glansdorff N."/>
            <person name="Goffeau A."/>
            <person name="Grenson M."/>
            <person name="Grisanti P."/>
            <person name="Grivell L.A."/>
            <person name="de Haan M."/>
            <person name="Haasemann M."/>
            <person name="Hatat D."/>
            <person name="Hoenicka J."/>
            <person name="Hegemann J.H."/>
            <person name="Herbert C.J."/>
            <person name="Hilger F."/>
            <person name="Hohmann S."/>
            <person name="Hollenberg C.P."/>
            <person name="Huse K."/>
            <person name="Iborra F."/>
            <person name="Indge K.J."/>
            <person name="Isono K."/>
            <person name="Jacq C."/>
            <person name="Jacquet M."/>
            <person name="James C.M."/>
            <person name="Jauniaux J.-C."/>
            <person name="Jia Y."/>
            <person name="Jimenez A."/>
            <person name="Kelly A."/>
            <person name="Kleinhans U."/>
            <person name="Kreisl P."/>
            <person name="Lanfranchi G."/>
            <person name="Lewis C."/>
            <person name="van der Linden C.G."/>
            <person name="Lucchini G."/>
            <person name="Lutzenkirchen K."/>
            <person name="Maat M.J."/>
            <person name="Mallet L."/>
            <person name="Mannhaupt G."/>
            <person name="Martegani E."/>
            <person name="Mathieu A."/>
            <person name="Maurer C.T.C."/>
            <person name="McConnell D."/>
            <person name="McKee R.A."/>
            <person name="Messenguy F."/>
            <person name="Mewes H.-W."/>
            <person name="Molemans F."/>
            <person name="Montague M.A."/>
            <person name="Muzi Falconi M."/>
            <person name="Navas L."/>
            <person name="Newlon C.S."/>
            <person name="Noone D."/>
            <person name="Pallier C."/>
            <person name="Panzeri L."/>
            <person name="Pearson B.M."/>
            <person name="Perea J."/>
            <person name="Philippsen P."/>
            <person name="Pierard A."/>
            <person name="Planta R.J."/>
            <person name="Plevani P."/>
            <person name="Poetsch B."/>
            <person name="Pohl F.M."/>
            <person name="Purnelle B."/>
            <person name="Ramezani Rad M."/>
            <person name="Rasmussen S.W."/>
            <person name="Raynal A."/>
            <person name="Remacha M.A."/>
            <person name="Richterich P."/>
            <person name="Roberts A.B."/>
            <person name="Rodriguez F."/>
            <person name="Sanz E."/>
            <person name="Schaaff-Gerstenschlaeger I."/>
            <person name="Scherens B."/>
            <person name="Schweitzer B."/>
            <person name="Shu Y."/>
            <person name="Skala J."/>
            <person name="Slonimski P.P."/>
            <person name="Sor F."/>
            <person name="Soustelle C."/>
            <person name="Spiegelberg R."/>
            <person name="Stateva L.I."/>
            <person name="Steensma H.Y."/>
            <person name="Steiner S."/>
            <person name="Thierry A."/>
            <person name="Thireos G."/>
            <person name="Tzermia M."/>
            <person name="Urrestarazu L.A."/>
            <person name="Valle G."/>
            <person name="Vetter I."/>
            <person name="van Vliet-Reedijk J.C."/>
            <person name="Voet M."/>
            <person name="Volckaert G."/>
            <person name="Vreken P."/>
            <person name="Wang H."/>
            <person name="Warmington J.R."/>
            <person name="von Wettstein D."/>
            <person name="Wicksteed B.L."/>
            <person name="Wilson C."/>
            <person name="Wurst H."/>
            <person name="Xu G."/>
            <person name="Yoshikawa A."/>
            <person name="Zimmermann F.K."/>
            <person name="Sgouros J.G."/>
        </authorList>
    </citation>
    <scope>NUCLEOTIDE SEQUENCE [LARGE SCALE GENOMIC DNA]</scope>
    <source>
        <strain>ATCC 204508 / S288c</strain>
    </source>
</reference>
<reference key="2">
    <citation type="journal article" date="2014" name="G3 (Bethesda)">
        <title>The reference genome sequence of Saccharomyces cerevisiae: Then and now.</title>
        <authorList>
            <person name="Engel S.R."/>
            <person name="Dietrich F.S."/>
            <person name="Fisk D.G."/>
            <person name="Binkley G."/>
            <person name="Balakrishnan R."/>
            <person name="Costanzo M.C."/>
            <person name="Dwight S.S."/>
            <person name="Hitz B.C."/>
            <person name="Karra K."/>
            <person name="Nash R.S."/>
            <person name="Weng S."/>
            <person name="Wong E.D."/>
            <person name="Lloyd P."/>
            <person name="Skrzypek M.S."/>
            <person name="Miyasato S.R."/>
            <person name="Simison M."/>
            <person name="Cherry J.M."/>
        </authorList>
    </citation>
    <scope>GENOME REANNOTATION</scope>
    <source>
        <strain>ATCC 204508 / S288c</strain>
    </source>
</reference>
<gene>
    <name type="ordered locus">YCR038W-A</name>
</gene>
<accession>Q96VG8</accession>
<proteinExistence type="uncertain"/>
<organism>
    <name type="scientific">Saccharomyces cerevisiae (strain ATCC 204508 / S288c)</name>
    <name type="common">Baker's yeast</name>
    <dbReference type="NCBI Taxonomy" id="559292"/>
    <lineage>
        <taxon>Eukaryota</taxon>
        <taxon>Fungi</taxon>
        <taxon>Dikarya</taxon>
        <taxon>Ascomycota</taxon>
        <taxon>Saccharomycotina</taxon>
        <taxon>Saccharomycetes</taxon>
        <taxon>Saccharomycetales</taxon>
        <taxon>Saccharomycetaceae</taxon>
        <taxon>Saccharomyces</taxon>
    </lineage>
</organism>
<feature type="chain" id="PRO_0000299836" description="Putative uncharacterized protein YCR038W-A">
    <location>
        <begin position="1"/>
        <end position="41"/>
    </location>
</feature>